<accession>A7FH32</accession>
<comment type="function">
    <text evidence="1">Phosphorylation of dTMP to form dTDP in both de novo and salvage pathways of dTTP synthesis.</text>
</comment>
<comment type="catalytic activity">
    <reaction evidence="1">
        <text>dTMP + ATP = dTDP + ADP</text>
        <dbReference type="Rhea" id="RHEA:13517"/>
        <dbReference type="ChEBI" id="CHEBI:30616"/>
        <dbReference type="ChEBI" id="CHEBI:58369"/>
        <dbReference type="ChEBI" id="CHEBI:63528"/>
        <dbReference type="ChEBI" id="CHEBI:456216"/>
        <dbReference type="EC" id="2.7.4.9"/>
    </reaction>
</comment>
<comment type="similarity">
    <text evidence="1">Belongs to the thymidylate kinase family.</text>
</comment>
<feature type="chain" id="PRO_1000058259" description="Thymidylate kinase">
    <location>
        <begin position="1"/>
        <end position="212"/>
    </location>
</feature>
<feature type="binding site" evidence="1">
    <location>
        <begin position="10"/>
        <end position="17"/>
    </location>
    <ligand>
        <name>ATP</name>
        <dbReference type="ChEBI" id="CHEBI:30616"/>
    </ligand>
</feature>
<reference key="1">
    <citation type="journal article" date="2007" name="PLoS Genet.">
        <title>The complete genome sequence of Yersinia pseudotuberculosis IP31758, the causative agent of Far East scarlet-like fever.</title>
        <authorList>
            <person name="Eppinger M."/>
            <person name="Rosovitz M.J."/>
            <person name="Fricke W.F."/>
            <person name="Rasko D.A."/>
            <person name="Kokorina G."/>
            <person name="Fayolle C."/>
            <person name="Lindler L.E."/>
            <person name="Carniel E."/>
            <person name="Ravel J."/>
        </authorList>
    </citation>
    <scope>NUCLEOTIDE SEQUENCE [LARGE SCALE GENOMIC DNA]</scope>
    <source>
        <strain>IP 31758</strain>
    </source>
</reference>
<gene>
    <name evidence="1" type="primary">tmk</name>
    <name type="ordered locus">YpsIP31758_1583</name>
</gene>
<proteinExistence type="inferred from homology"/>
<keyword id="KW-0067">ATP-binding</keyword>
<keyword id="KW-0418">Kinase</keyword>
<keyword id="KW-0545">Nucleotide biosynthesis</keyword>
<keyword id="KW-0547">Nucleotide-binding</keyword>
<keyword id="KW-0808">Transferase</keyword>
<name>KTHY_YERP3</name>
<evidence type="ECO:0000255" key="1">
    <source>
        <dbReference type="HAMAP-Rule" id="MF_00165"/>
    </source>
</evidence>
<organism>
    <name type="scientific">Yersinia pseudotuberculosis serotype O:1b (strain IP 31758)</name>
    <dbReference type="NCBI Taxonomy" id="349747"/>
    <lineage>
        <taxon>Bacteria</taxon>
        <taxon>Pseudomonadati</taxon>
        <taxon>Pseudomonadota</taxon>
        <taxon>Gammaproteobacteria</taxon>
        <taxon>Enterobacterales</taxon>
        <taxon>Yersiniaceae</taxon>
        <taxon>Yersinia</taxon>
    </lineage>
</organism>
<dbReference type="EC" id="2.7.4.9" evidence="1"/>
<dbReference type="EMBL" id="CP000720">
    <property type="protein sequence ID" value="ABS45934.1"/>
    <property type="molecule type" value="Genomic_DNA"/>
</dbReference>
<dbReference type="RefSeq" id="WP_011192604.1">
    <property type="nucleotide sequence ID" value="NC_009708.1"/>
</dbReference>
<dbReference type="SMR" id="A7FH32"/>
<dbReference type="KEGG" id="ypi:YpsIP31758_1583"/>
<dbReference type="HOGENOM" id="CLU_049131_0_1_6"/>
<dbReference type="Proteomes" id="UP000002412">
    <property type="component" value="Chromosome"/>
</dbReference>
<dbReference type="GO" id="GO:0005829">
    <property type="term" value="C:cytosol"/>
    <property type="evidence" value="ECO:0007669"/>
    <property type="project" value="TreeGrafter"/>
</dbReference>
<dbReference type="GO" id="GO:0005524">
    <property type="term" value="F:ATP binding"/>
    <property type="evidence" value="ECO:0007669"/>
    <property type="project" value="UniProtKB-UniRule"/>
</dbReference>
<dbReference type="GO" id="GO:0004798">
    <property type="term" value="F:dTMP kinase activity"/>
    <property type="evidence" value="ECO:0007669"/>
    <property type="project" value="UniProtKB-UniRule"/>
</dbReference>
<dbReference type="GO" id="GO:0006233">
    <property type="term" value="P:dTDP biosynthetic process"/>
    <property type="evidence" value="ECO:0007669"/>
    <property type="project" value="InterPro"/>
</dbReference>
<dbReference type="GO" id="GO:0006235">
    <property type="term" value="P:dTTP biosynthetic process"/>
    <property type="evidence" value="ECO:0007669"/>
    <property type="project" value="UniProtKB-UniRule"/>
</dbReference>
<dbReference type="GO" id="GO:0006227">
    <property type="term" value="P:dUDP biosynthetic process"/>
    <property type="evidence" value="ECO:0007669"/>
    <property type="project" value="TreeGrafter"/>
</dbReference>
<dbReference type="CDD" id="cd01672">
    <property type="entry name" value="TMPK"/>
    <property type="match status" value="1"/>
</dbReference>
<dbReference type="FunFam" id="3.40.50.300:FF:000321">
    <property type="entry name" value="Thymidylate kinase"/>
    <property type="match status" value="1"/>
</dbReference>
<dbReference type="Gene3D" id="3.40.50.300">
    <property type="entry name" value="P-loop containing nucleotide triphosphate hydrolases"/>
    <property type="match status" value="1"/>
</dbReference>
<dbReference type="HAMAP" id="MF_00165">
    <property type="entry name" value="Thymidylate_kinase"/>
    <property type="match status" value="1"/>
</dbReference>
<dbReference type="InterPro" id="IPR027417">
    <property type="entry name" value="P-loop_NTPase"/>
</dbReference>
<dbReference type="InterPro" id="IPR039430">
    <property type="entry name" value="Thymidylate_kin-like_dom"/>
</dbReference>
<dbReference type="InterPro" id="IPR018095">
    <property type="entry name" value="Thymidylate_kin_CS"/>
</dbReference>
<dbReference type="InterPro" id="IPR018094">
    <property type="entry name" value="Thymidylate_kinase"/>
</dbReference>
<dbReference type="NCBIfam" id="TIGR00041">
    <property type="entry name" value="DTMP_kinase"/>
    <property type="match status" value="1"/>
</dbReference>
<dbReference type="PANTHER" id="PTHR10344">
    <property type="entry name" value="THYMIDYLATE KINASE"/>
    <property type="match status" value="1"/>
</dbReference>
<dbReference type="PANTHER" id="PTHR10344:SF4">
    <property type="entry name" value="UMP-CMP KINASE 2, MITOCHONDRIAL"/>
    <property type="match status" value="1"/>
</dbReference>
<dbReference type="Pfam" id="PF02223">
    <property type="entry name" value="Thymidylate_kin"/>
    <property type="match status" value="1"/>
</dbReference>
<dbReference type="SUPFAM" id="SSF52540">
    <property type="entry name" value="P-loop containing nucleoside triphosphate hydrolases"/>
    <property type="match status" value="1"/>
</dbReference>
<dbReference type="PROSITE" id="PS01331">
    <property type="entry name" value="THYMIDYLATE_KINASE"/>
    <property type="match status" value="1"/>
</dbReference>
<protein>
    <recommendedName>
        <fullName evidence="1">Thymidylate kinase</fullName>
        <ecNumber evidence="1">2.7.4.9</ecNumber>
    </recommendedName>
    <alternativeName>
        <fullName evidence="1">dTMP kinase</fullName>
    </alternativeName>
</protein>
<sequence>MNSKFIVIEGLEGAGKTTARDTVVAVLRAQGINDIVFTREPGGTPLAEKLRDLIKQGIDGEVLTDKAEVLMLYAARVQLVENVIKPALARGSWVVGDRHDLSSQAYQGGGRGIDSQLMASLRDTVLGEFRPDLTLYLDLPPAVGLARARARGELDRIEQESLAFFERTRARYLELAASDASIKTIDASQPIEQVSASISQALAQWLTNQELV</sequence>